<reference key="1">
    <citation type="journal article" date="2006" name="PLoS Biol.">
        <title>Macronuclear genome sequence of the ciliate Tetrahymena thermophila, a model eukaryote.</title>
        <authorList>
            <person name="Eisen J.A."/>
            <person name="Coyne R.S."/>
            <person name="Wu M."/>
            <person name="Wu D."/>
            <person name="Thiagarajan M."/>
            <person name="Wortman J.R."/>
            <person name="Badger J.H."/>
            <person name="Ren Q."/>
            <person name="Amedeo P."/>
            <person name="Jones K.M."/>
            <person name="Tallon L.J."/>
            <person name="Delcher A.L."/>
            <person name="Salzberg S.L."/>
            <person name="Silva J.C."/>
            <person name="Haas B.J."/>
            <person name="Majoros W.H."/>
            <person name="Farzad M."/>
            <person name="Carlton J.M."/>
            <person name="Smith R.K. Jr."/>
            <person name="Garg J."/>
            <person name="Pearlman R.E."/>
            <person name="Karrer K.M."/>
            <person name="Sun L."/>
            <person name="Manning G."/>
            <person name="Elde N.C."/>
            <person name="Turkewitz A.P."/>
            <person name="Asai D.J."/>
            <person name="Wilkes D.E."/>
            <person name="Wang Y."/>
            <person name="Cai H."/>
            <person name="Collins K."/>
            <person name="Stewart B.A."/>
            <person name="Lee S.R."/>
            <person name="Wilamowska K."/>
            <person name="Weinberg Z."/>
            <person name="Ruzzo W.L."/>
            <person name="Wloga D."/>
            <person name="Gaertig J."/>
            <person name="Frankel J."/>
            <person name="Tsao C.-C."/>
            <person name="Gorovsky M.A."/>
            <person name="Keeling P.J."/>
            <person name="Waller R.F."/>
            <person name="Patron N.J."/>
            <person name="Cherry J.M."/>
            <person name="Stover N.A."/>
            <person name="Krieger C.J."/>
            <person name="del Toro C."/>
            <person name="Ryder H.F."/>
            <person name="Williamson S.C."/>
            <person name="Barbeau R.A."/>
            <person name="Hamilton E.P."/>
            <person name="Orias E."/>
        </authorList>
    </citation>
    <scope>NUCLEOTIDE SEQUENCE [LARGE SCALE GENOMIC DNA]</scope>
    <source>
        <strain>SB210</strain>
    </source>
</reference>
<reference key="2">
    <citation type="journal article" date="2009" name="Dev. Cell">
        <title>TTLL3 Is a tubulin glycine ligase that regulates the assembly of cilia.</title>
        <authorList>
            <person name="Wloga D."/>
            <person name="Webster D.M."/>
            <person name="Rogowski K."/>
            <person name="Bre M.-H."/>
            <person name="Levilliers N."/>
            <person name="Jerka-Dziadosz M."/>
            <person name="Janke C."/>
            <person name="Dougan S.T."/>
            <person name="Gaertig J."/>
        </authorList>
    </citation>
    <scope>FUNCTION</scope>
    <scope>CATALYTIC ACTIVITY</scope>
    <scope>SUBCELLULAR LOCATION</scope>
    <scope>DISRUPTION PHENOTYPE</scope>
</reference>
<gene>
    <name type="primary">TTLL3B</name>
    <name type="ORF">TTHERM_00125600</name>
</gene>
<organism>
    <name type="scientific">Tetrahymena thermophila (strain SB210)</name>
    <dbReference type="NCBI Taxonomy" id="312017"/>
    <lineage>
        <taxon>Eukaryota</taxon>
        <taxon>Sar</taxon>
        <taxon>Alveolata</taxon>
        <taxon>Ciliophora</taxon>
        <taxon>Intramacronucleata</taxon>
        <taxon>Oligohymenophorea</taxon>
        <taxon>Hymenostomatida</taxon>
        <taxon>Tetrahymenina</taxon>
        <taxon>Tetrahymenidae</taxon>
        <taxon>Tetrahymena</taxon>
    </lineage>
</organism>
<proteinExistence type="evidence at protein level"/>
<evidence type="ECO:0000250" key="1">
    <source>
        <dbReference type="UniProtKB" id="Q6ZT98"/>
    </source>
</evidence>
<evidence type="ECO:0000255" key="2">
    <source>
        <dbReference type="PROSITE-ProRule" id="PRU00568"/>
    </source>
</evidence>
<evidence type="ECO:0000256" key="3">
    <source>
        <dbReference type="SAM" id="MobiDB-lite"/>
    </source>
</evidence>
<evidence type="ECO:0000269" key="4">
    <source>
    </source>
</evidence>
<sequence>MFSIDIQGKSMSLCDPTSKIKQMQQQQQQLQQGTNNGIQKDQQLPNMIINGNSNSYLNNGSNLQQQAVIQQSNHKQSQIKYNSPLSHQQHHQFKIGHQNKLEYLRQQQAQKYNQIYQLDPQLQQQNQMFQQHQYMQNVQMQQQLLYQGNQEVFPPFNQIANGSAQNSILLQQYLSNNKGQTNNSNRENGGNFHSEQSPKSAAGSVVSGNGSNTQFAANILRNSNIIQQQNEFRFQQIQQTHQLLHSLVQQQPQPLSQQHSNQSSQSSNPQSQSPLPLSISSQQPVISMANYFNQPSQQSNSLFNGQQPTMFNSSENFQQKNILYSCVGNPNNPYNHHINNPYLQEKRYYKSSKLPKIKKENKPQQAFSDIRPSSREKSARFHLAASINTILNQNGSTSVNTQNNENMVQTLKGHSYSAVTEKSNIGQQEVNIPTTSKTQTLIKEHSLTNINSASKENNQVTLASNSNQTSKKAYENLMSAENDEEDKLKCIRYFRYNLGQLLHILGKKEIYFSNLNSKKPIKTFASITQQLGQKHMNLLSKNTINIINKVKKIVATKGKYKYRERFNFLHSAQLKSINYDVRKRLNQIQDKKVLSNTKSKDEEESSDDDETPVKSKSNNQNAVQQTDLAKWKKYNRLDPKTKVFIIKGGYGDLRKALQERGWVENPDYFSPCFDLKWTCKVQDIDYDNLQENQVVNHFDNNQTFTSKYGLARNLRTLIHSENIDVYKFFPRCFDLGDLQEFEDFIENFKVAKAESLVHRFKDMLKNGIESIDDKLELKIRLCNEVASRKFIDFYETVDFIFNYDVLPCVSPEEWEIISKDEFQLDNKKIEFYLERLRSHPTFKHLYYSNSQSQKQHMNKRKNSHRISVNHNHNDPIEEESAQSSTSLKQDSLQRFSSKSQELLDLCNQTLKKSSEKDPQHHLNGYRNIWIVKPNFLSRGRGIKCFNSLDKIMDYVVGKETQFVVQKYIENPLLINNKKFDMRQWAIVQDFCPPRIWFFEECYIRLCSVEHNIDDLNNRFVHLTNNIVQKYNKDAYADKDDLMMSQEQFAQYLKETEGRDVFYEEIQPKLKQMVIQSLKSCQDQVGARKNSMEFIGYDFMIDSNYQPWLIEINSSPSMEYSTSITEELVQRVLQDTTKVIVDYSMAKKGTKKNVDTGGFKLIYKGEKQTKNNKVLASYKK</sequence>
<dbReference type="EC" id="6.3.2.-"/>
<dbReference type="EMBL" id="GG662699">
    <property type="protein sequence ID" value="EAR95994.2"/>
    <property type="molecule type" value="Genomic_DNA"/>
</dbReference>
<dbReference type="RefSeq" id="XP_001016239.2">
    <property type="nucleotide sequence ID" value="XM_001016239.2"/>
</dbReference>
<dbReference type="SMR" id="P0CAZ0"/>
<dbReference type="STRING" id="312017.P0CAZ0"/>
<dbReference type="EnsemblProtists" id="EAR95994">
    <property type="protein sequence ID" value="EAR95994"/>
    <property type="gene ID" value="TTHERM_00125600"/>
</dbReference>
<dbReference type="GeneID" id="7838273"/>
<dbReference type="KEGG" id="tet:TTHERM_00125600"/>
<dbReference type="eggNOG" id="KOG2157">
    <property type="taxonomic scope" value="Eukaryota"/>
</dbReference>
<dbReference type="HOGENOM" id="CLU_275415_0_0_1"/>
<dbReference type="InParanoid" id="P0CAZ0"/>
<dbReference type="OrthoDB" id="10255472at2759"/>
<dbReference type="Proteomes" id="UP000009168">
    <property type="component" value="Unassembled WGS sequence"/>
</dbReference>
<dbReference type="GO" id="GO:0005929">
    <property type="term" value="C:cilium"/>
    <property type="evidence" value="ECO:0000314"/>
    <property type="project" value="UniProtKB"/>
</dbReference>
<dbReference type="GO" id="GO:0005737">
    <property type="term" value="C:cytoplasm"/>
    <property type="evidence" value="ECO:0007669"/>
    <property type="project" value="UniProtKB-KW"/>
</dbReference>
<dbReference type="GO" id="GO:0015630">
    <property type="term" value="C:microtubule cytoskeleton"/>
    <property type="evidence" value="ECO:0007669"/>
    <property type="project" value="TreeGrafter"/>
</dbReference>
<dbReference type="GO" id="GO:0005524">
    <property type="term" value="F:ATP binding"/>
    <property type="evidence" value="ECO:0007669"/>
    <property type="project" value="UniProtKB-KW"/>
</dbReference>
<dbReference type="GO" id="GO:0070735">
    <property type="term" value="F:protein-glycine ligase activity"/>
    <property type="evidence" value="ECO:0000314"/>
    <property type="project" value="UniProtKB"/>
</dbReference>
<dbReference type="GO" id="GO:0070737">
    <property type="term" value="F:protein-glycine ligase activity, elongating"/>
    <property type="evidence" value="ECO:0000314"/>
    <property type="project" value="UniProtKB"/>
</dbReference>
<dbReference type="GO" id="GO:0070736">
    <property type="term" value="F:protein-glycine ligase activity, initiating"/>
    <property type="evidence" value="ECO:0007669"/>
    <property type="project" value="TreeGrafter"/>
</dbReference>
<dbReference type="GO" id="GO:0035082">
    <property type="term" value="P:axoneme assembly"/>
    <property type="evidence" value="ECO:0000315"/>
    <property type="project" value="UniProtKB"/>
</dbReference>
<dbReference type="GO" id="GO:0060271">
    <property type="term" value="P:cilium assembly"/>
    <property type="evidence" value="ECO:0000315"/>
    <property type="project" value="UniProtKB"/>
</dbReference>
<dbReference type="GO" id="GO:0018094">
    <property type="term" value="P:protein polyglycylation"/>
    <property type="evidence" value="ECO:0000314"/>
    <property type="project" value="UniProtKB"/>
</dbReference>
<dbReference type="FunFam" id="3.30.470.20:FF:000032">
    <property type="entry name" value="tubulin monoglycylase TTLL3 isoform X2"/>
    <property type="match status" value="1"/>
</dbReference>
<dbReference type="Gene3D" id="3.30.470.20">
    <property type="entry name" value="ATP-grasp fold, B domain"/>
    <property type="match status" value="1"/>
</dbReference>
<dbReference type="InterPro" id="IPR004344">
    <property type="entry name" value="TTL/TTLL_fam"/>
</dbReference>
<dbReference type="InterPro" id="IPR051437">
    <property type="entry name" value="TTLL_monoglycylase"/>
</dbReference>
<dbReference type="PANTHER" id="PTHR45870">
    <property type="entry name" value="TUBULIN MONOGLYCYLASE TTLL3"/>
    <property type="match status" value="1"/>
</dbReference>
<dbReference type="PANTHER" id="PTHR45870:SF2">
    <property type="entry name" value="TUBULIN MONOGLYCYLASE TTLL3"/>
    <property type="match status" value="1"/>
</dbReference>
<dbReference type="Pfam" id="PF03133">
    <property type="entry name" value="TTL"/>
    <property type="match status" value="1"/>
</dbReference>
<dbReference type="SUPFAM" id="SSF56059">
    <property type="entry name" value="Glutathione synthetase ATP-binding domain-like"/>
    <property type="match status" value="1"/>
</dbReference>
<dbReference type="PROSITE" id="PS51221">
    <property type="entry name" value="TTL"/>
    <property type="match status" value="1"/>
</dbReference>
<comment type="function">
    <text evidence="4">Polyglycylase which modifies tubulin, generating side chains of glycine on the gamma-carboxyl groups of specific glutamate residues within the C-terminal tail of tubulin. Polyglycylates tubulin, with a preference for alpha-tubulin toward beta-tubulin.</text>
</comment>
<comment type="subcellular location">
    <subcellularLocation>
        <location evidence="4">Cell projection</location>
        <location evidence="4">Cilium</location>
    </subcellularLocation>
    <subcellularLocation>
        <location evidence="4">Cytoplasm</location>
        <location evidence="4">Cytoskeleton</location>
        <location evidence="4">Cilium axoneme</location>
    </subcellularLocation>
    <text>Mainly present in oral cilia.</text>
</comment>
<comment type="disruption phenotype">
    <text evidence="4">Cells lacking TTLL3A and TTLL3B show a strongly reduced level of monoglycylated tubulin and a moderately reduced level of polycylated tubulin. Cells lacking TTLL3A, TTLL3B, TTLL3C, TTLL3D, TTLL3E and TTLL3F display shortened axonemes that are resistant to paclitaxel, indicating that tubulin glycylation changes the lattice properties of axonemal microtubules. Axonemes are however normal at the ultrastructural level.</text>
</comment>
<protein>
    <recommendedName>
        <fullName>Tubulin glycylase 3B</fullName>
        <ecNumber>6.3.2.-</ecNumber>
    </recommendedName>
</protein>
<name>TTL3B_TETTS</name>
<accession>P0CAZ0</accession>
<feature type="chain" id="PRO_0000381798" description="Tubulin glycylase 3B">
    <location>
        <begin position="1"/>
        <end position="1179"/>
    </location>
</feature>
<feature type="domain" description="TTL" evidence="2">
    <location>
        <begin position="790"/>
        <end position="1152"/>
    </location>
</feature>
<feature type="region of interest" description="Disordered" evidence="3">
    <location>
        <begin position="177"/>
        <end position="208"/>
    </location>
</feature>
<feature type="region of interest" description="Disordered" evidence="3">
    <location>
        <begin position="250"/>
        <end position="278"/>
    </location>
</feature>
<feature type="region of interest" description="Disordered" evidence="3">
    <location>
        <begin position="592"/>
        <end position="625"/>
    </location>
</feature>
<feature type="region of interest" description="Disordered" evidence="3">
    <location>
        <begin position="853"/>
        <end position="890"/>
    </location>
</feature>
<feature type="compositionally biased region" description="Polar residues" evidence="3">
    <location>
        <begin position="177"/>
        <end position="199"/>
    </location>
</feature>
<feature type="compositionally biased region" description="Basic and acidic residues" evidence="3">
    <location>
        <begin position="592"/>
        <end position="601"/>
    </location>
</feature>
<feature type="compositionally biased region" description="Polar residues" evidence="3">
    <location>
        <begin position="614"/>
        <end position="625"/>
    </location>
</feature>
<feature type="compositionally biased region" description="Polar residues" evidence="3">
    <location>
        <begin position="881"/>
        <end position="890"/>
    </location>
</feature>
<feature type="binding site" evidence="1">
    <location>
        <begin position="965"/>
        <end position="968"/>
    </location>
    <ligand>
        <name>ATP</name>
        <dbReference type="ChEBI" id="CHEBI:30616"/>
    </ligand>
</feature>
<feature type="binding site" evidence="1">
    <location>
        <position position="978"/>
    </location>
    <ligand>
        <name>ATP</name>
        <dbReference type="ChEBI" id="CHEBI:30616"/>
    </ligand>
</feature>
<feature type="binding site" evidence="1">
    <location>
        <position position="980"/>
    </location>
    <ligand>
        <name>ATP</name>
        <dbReference type="ChEBI" id="CHEBI:30616"/>
    </ligand>
</feature>
<keyword id="KW-0067">ATP-binding</keyword>
<keyword id="KW-0966">Cell projection</keyword>
<keyword id="KW-0969">Cilium</keyword>
<keyword id="KW-0963">Cytoplasm</keyword>
<keyword id="KW-0206">Cytoskeleton</keyword>
<keyword id="KW-0436">Ligase</keyword>
<keyword id="KW-0547">Nucleotide-binding</keyword>
<keyword id="KW-1185">Reference proteome</keyword>